<reference key="1">
    <citation type="journal article" date="1997" name="Microbiology">
        <title>Sequencing and functional annotation of the Bacillus subtilis genes in the 200 kb rrnB-dnaB region.</title>
        <authorList>
            <person name="Lapidus A."/>
            <person name="Galleron N."/>
            <person name="Sorokin A."/>
            <person name="Ehrlich S.D."/>
        </authorList>
    </citation>
    <scope>NUCLEOTIDE SEQUENCE [GENOMIC DNA]</scope>
</reference>
<reference key="2">
    <citation type="journal article" date="1997" name="Nature">
        <title>The complete genome sequence of the Gram-positive bacterium Bacillus subtilis.</title>
        <authorList>
            <person name="Kunst F."/>
            <person name="Ogasawara N."/>
            <person name="Moszer I."/>
            <person name="Albertini A.M."/>
            <person name="Alloni G."/>
            <person name="Azevedo V."/>
            <person name="Bertero M.G."/>
            <person name="Bessieres P."/>
            <person name="Bolotin A."/>
            <person name="Borchert S."/>
            <person name="Borriss R."/>
            <person name="Boursier L."/>
            <person name="Brans A."/>
            <person name="Braun M."/>
            <person name="Brignell S.C."/>
            <person name="Bron S."/>
            <person name="Brouillet S."/>
            <person name="Bruschi C.V."/>
            <person name="Caldwell B."/>
            <person name="Capuano V."/>
            <person name="Carter N.M."/>
            <person name="Choi S.-K."/>
            <person name="Codani J.-J."/>
            <person name="Connerton I.F."/>
            <person name="Cummings N.J."/>
            <person name="Daniel R.A."/>
            <person name="Denizot F."/>
            <person name="Devine K.M."/>
            <person name="Duesterhoeft A."/>
            <person name="Ehrlich S.D."/>
            <person name="Emmerson P.T."/>
            <person name="Entian K.-D."/>
            <person name="Errington J."/>
            <person name="Fabret C."/>
            <person name="Ferrari E."/>
            <person name="Foulger D."/>
            <person name="Fritz C."/>
            <person name="Fujita M."/>
            <person name="Fujita Y."/>
            <person name="Fuma S."/>
            <person name="Galizzi A."/>
            <person name="Galleron N."/>
            <person name="Ghim S.-Y."/>
            <person name="Glaser P."/>
            <person name="Goffeau A."/>
            <person name="Golightly E.J."/>
            <person name="Grandi G."/>
            <person name="Guiseppi G."/>
            <person name="Guy B.J."/>
            <person name="Haga K."/>
            <person name="Haiech J."/>
            <person name="Harwood C.R."/>
            <person name="Henaut A."/>
            <person name="Hilbert H."/>
            <person name="Holsappel S."/>
            <person name="Hosono S."/>
            <person name="Hullo M.-F."/>
            <person name="Itaya M."/>
            <person name="Jones L.-M."/>
            <person name="Joris B."/>
            <person name="Karamata D."/>
            <person name="Kasahara Y."/>
            <person name="Klaerr-Blanchard M."/>
            <person name="Klein C."/>
            <person name="Kobayashi Y."/>
            <person name="Koetter P."/>
            <person name="Koningstein G."/>
            <person name="Krogh S."/>
            <person name="Kumano M."/>
            <person name="Kurita K."/>
            <person name="Lapidus A."/>
            <person name="Lardinois S."/>
            <person name="Lauber J."/>
            <person name="Lazarevic V."/>
            <person name="Lee S.-M."/>
            <person name="Levine A."/>
            <person name="Liu H."/>
            <person name="Masuda S."/>
            <person name="Mauel C."/>
            <person name="Medigue C."/>
            <person name="Medina N."/>
            <person name="Mellado R.P."/>
            <person name="Mizuno M."/>
            <person name="Moestl D."/>
            <person name="Nakai S."/>
            <person name="Noback M."/>
            <person name="Noone D."/>
            <person name="O'Reilly M."/>
            <person name="Ogawa K."/>
            <person name="Ogiwara A."/>
            <person name="Oudega B."/>
            <person name="Park S.-H."/>
            <person name="Parro V."/>
            <person name="Pohl T.M."/>
            <person name="Portetelle D."/>
            <person name="Porwollik S."/>
            <person name="Prescott A.M."/>
            <person name="Presecan E."/>
            <person name="Pujic P."/>
            <person name="Purnelle B."/>
            <person name="Rapoport G."/>
            <person name="Rey M."/>
            <person name="Reynolds S."/>
            <person name="Rieger M."/>
            <person name="Rivolta C."/>
            <person name="Rocha E."/>
            <person name="Roche B."/>
            <person name="Rose M."/>
            <person name="Sadaie Y."/>
            <person name="Sato T."/>
            <person name="Scanlan E."/>
            <person name="Schleich S."/>
            <person name="Schroeter R."/>
            <person name="Scoffone F."/>
            <person name="Sekiguchi J."/>
            <person name="Sekowska A."/>
            <person name="Seror S.J."/>
            <person name="Serror P."/>
            <person name="Shin B.-S."/>
            <person name="Soldo B."/>
            <person name="Sorokin A."/>
            <person name="Tacconi E."/>
            <person name="Takagi T."/>
            <person name="Takahashi H."/>
            <person name="Takemaru K."/>
            <person name="Takeuchi M."/>
            <person name="Tamakoshi A."/>
            <person name="Tanaka T."/>
            <person name="Terpstra P."/>
            <person name="Tognoni A."/>
            <person name="Tosato V."/>
            <person name="Uchiyama S."/>
            <person name="Vandenbol M."/>
            <person name="Vannier F."/>
            <person name="Vassarotti A."/>
            <person name="Viari A."/>
            <person name="Wambutt R."/>
            <person name="Wedler E."/>
            <person name="Wedler H."/>
            <person name="Weitzenegger T."/>
            <person name="Winters P."/>
            <person name="Wipat A."/>
            <person name="Yamamoto H."/>
            <person name="Yamane K."/>
            <person name="Yasumoto K."/>
            <person name="Yata K."/>
            <person name="Yoshida K."/>
            <person name="Yoshikawa H.-F."/>
            <person name="Zumstein E."/>
            <person name="Yoshikawa H."/>
            <person name="Danchin A."/>
        </authorList>
    </citation>
    <scope>NUCLEOTIDE SEQUENCE [LARGE SCALE GENOMIC DNA]</scope>
    <source>
        <strain>168</strain>
    </source>
</reference>
<feature type="chain" id="PRO_0000120599" description="NAD kinase 2">
    <location>
        <begin position="1"/>
        <end position="267"/>
    </location>
</feature>
<feature type="active site" description="Proton acceptor" evidence="1">
    <location>
        <position position="52"/>
    </location>
</feature>
<feature type="binding site" evidence="1">
    <location>
        <begin position="52"/>
        <end position="53"/>
    </location>
    <ligand>
        <name>NAD(+)</name>
        <dbReference type="ChEBI" id="CHEBI:57540"/>
    </ligand>
</feature>
<feature type="binding site" evidence="1">
    <location>
        <begin position="124"/>
        <end position="125"/>
    </location>
    <ligand>
        <name>NAD(+)</name>
        <dbReference type="ChEBI" id="CHEBI:57540"/>
    </ligand>
</feature>
<feature type="binding site" evidence="1">
    <location>
        <position position="151"/>
    </location>
    <ligand>
        <name>NAD(+)</name>
        <dbReference type="ChEBI" id="CHEBI:57540"/>
    </ligand>
</feature>
<feature type="binding site" evidence="1">
    <location>
        <position position="153"/>
    </location>
    <ligand>
        <name>NAD(+)</name>
        <dbReference type="ChEBI" id="CHEBI:57540"/>
    </ligand>
</feature>
<feature type="binding site" evidence="1">
    <location>
        <begin position="164"/>
        <end position="169"/>
    </location>
    <ligand>
        <name>NAD(+)</name>
        <dbReference type="ChEBI" id="CHEBI:57540"/>
    </ligand>
</feature>
<feature type="binding site" evidence="1">
    <location>
        <position position="188"/>
    </location>
    <ligand>
        <name>NAD(+)</name>
        <dbReference type="ChEBI" id="CHEBI:57540"/>
    </ligand>
</feature>
<organism>
    <name type="scientific">Bacillus subtilis (strain 168)</name>
    <dbReference type="NCBI Taxonomy" id="224308"/>
    <lineage>
        <taxon>Bacteria</taxon>
        <taxon>Bacillati</taxon>
        <taxon>Bacillota</taxon>
        <taxon>Bacilli</taxon>
        <taxon>Bacillales</taxon>
        <taxon>Bacillaceae</taxon>
        <taxon>Bacillus</taxon>
    </lineage>
</organism>
<proteinExistence type="inferred from homology"/>
<protein>
    <recommendedName>
        <fullName evidence="1">NAD kinase 2</fullName>
        <ecNumber evidence="1">2.7.1.23</ecNumber>
    </recommendedName>
    <alternativeName>
        <fullName evidence="1">ATP-dependent NAD kinase 2</fullName>
    </alternativeName>
</protein>
<sequence length="267" mass="30253">MTDQRRNVYFFHKQDQETNEQARSLTQLAEEHGFTVVNQHSDANIIASIGGDGTFLQAVRKTNFRDDCLYVGITKKGKAHLYCDFHSDEREKMVDAMTFEQIEVRKYPLIEVTVDQASPFHCLNEVSIRSSIIKTFVMDVLIDDLHFETFRGDGMIISTPTGSTAYNKSVAGAVVDPLLPCMQVSELASLNNNTYRTLGSPFVLSSDRKLTLRVVQDGNEHPIIGLDNEALSTRNVKTIEIKLSNKKIKTVKLKDNSFWEKVKRTFL</sequence>
<evidence type="ECO:0000255" key="1">
    <source>
        <dbReference type="HAMAP-Rule" id="MF_00361"/>
    </source>
</evidence>
<accession>O34934</accession>
<keyword id="KW-0067">ATP-binding</keyword>
<keyword id="KW-0963">Cytoplasm</keyword>
<keyword id="KW-0418">Kinase</keyword>
<keyword id="KW-0520">NAD</keyword>
<keyword id="KW-0521">NADP</keyword>
<keyword id="KW-0547">Nucleotide-binding</keyword>
<keyword id="KW-1185">Reference proteome</keyword>
<keyword id="KW-0808">Transferase</keyword>
<comment type="function">
    <text evidence="1">Involved in the regulation of the intracellular balance of NAD and NADP, and is a key enzyme in the biosynthesis of NADP. Catalyzes specifically the phosphorylation on 2'-hydroxyl of the adenosine moiety of NAD to yield NADP.</text>
</comment>
<comment type="catalytic activity">
    <reaction evidence="1">
        <text>NAD(+) + ATP = ADP + NADP(+) + H(+)</text>
        <dbReference type="Rhea" id="RHEA:18629"/>
        <dbReference type="ChEBI" id="CHEBI:15378"/>
        <dbReference type="ChEBI" id="CHEBI:30616"/>
        <dbReference type="ChEBI" id="CHEBI:57540"/>
        <dbReference type="ChEBI" id="CHEBI:58349"/>
        <dbReference type="ChEBI" id="CHEBI:456216"/>
        <dbReference type="EC" id="2.7.1.23"/>
    </reaction>
</comment>
<comment type="cofactor">
    <cofactor evidence="1">
        <name>a divalent metal cation</name>
        <dbReference type="ChEBI" id="CHEBI:60240"/>
    </cofactor>
</comment>
<comment type="subcellular location">
    <subcellularLocation>
        <location evidence="1">Cytoplasm</location>
    </subcellularLocation>
</comment>
<comment type="similarity">
    <text evidence="1">Belongs to the NAD kinase family.</text>
</comment>
<gene>
    <name evidence="1" type="primary">nadK2</name>
    <name type="ordered locus">BSU29540</name>
</gene>
<name>NADK2_BACSU</name>
<dbReference type="EC" id="2.7.1.23" evidence="1"/>
<dbReference type="EMBL" id="AF008220">
    <property type="protein sequence ID" value="AAC00401.1"/>
    <property type="molecule type" value="Genomic_DNA"/>
</dbReference>
<dbReference type="EMBL" id="AL009126">
    <property type="protein sequence ID" value="CAB14932.1"/>
    <property type="molecule type" value="Genomic_DNA"/>
</dbReference>
<dbReference type="PIR" id="B69990">
    <property type="entry name" value="B69990"/>
</dbReference>
<dbReference type="RefSeq" id="WP_004399091.1">
    <property type="nucleotide sequence ID" value="NZ_OZ025638.1"/>
</dbReference>
<dbReference type="SMR" id="O34934"/>
<dbReference type="FunCoup" id="O34934">
    <property type="interactions" value="462"/>
</dbReference>
<dbReference type="STRING" id="224308.BSU29540"/>
<dbReference type="jPOST" id="O34934"/>
<dbReference type="PaxDb" id="224308-BSU29540"/>
<dbReference type="EnsemblBacteria" id="CAB14932">
    <property type="protein sequence ID" value="CAB14932"/>
    <property type="gene ID" value="BSU_29540"/>
</dbReference>
<dbReference type="GeneID" id="936767"/>
<dbReference type="KEGG" id="bsu:BSU29540"/>
<dbReference type="PATRIC" id="fig|224308.179.peg.3210"/>
<dbReference type="eggNOG" id="COG0061">
    <property type="taxonomic scope" value="Bacteria"/>
</dbReference>
<dbReference type="InParanoid" id="O34934"/>
<dbReference type="OrthoDB" id="9774737at2"/>
<dbReference type="PhylomeDB" id="O34934"/>
<dbReference type="BioCyc" id="BSUB:BSU29540-MONOMER"/>
<dbReference type="BRENDA" id="2.7.1.23">
    <property type="organism ID" value="658"/>
</dbReference>
<dbReference type="Proteomes" id="UP000001570">
    <property type="component" value="Chromosome"/>
</dbReference>
<dbReference type="GO" id="GO:0005737">
    <property type="term" value="C:cytoplasm"/>
    <property type="evidence" value="ECO:0007669"/>
    <property type="project" value="UniProtKB-SubCell"/>
</dbReference>
<dbReference type="GO" id="GO:0005524">
    <property type="term" value="F:ATP binding"/>
    <property type="evidence" value="ECO:0007669"/>
    <property type="project" value="UniProtKB-KW"/>
</dbReference>
<dbReference type="GO" id="GO:0046872">
    <property type="term" value="F:metal ion binding"/>
    <property type="evidence" value="ECO:0007669"/>
    <property type="project" value="UniProtKB-UniRule"/>
</dbReference>
<dbReference type="GO" id="GO:0051287">
    <property type="term" value="F:NAD binding"/>
    <property type="evidence" value="ECO:0007669"/>
    <property type="project" value="UniProtKB-ARBA"/>
</dbReference>
<dbReference type="GO" id="GO:0003951">
    <property type="term" value="F:NAD+ kinase activity"/>
    <property type="evidence" value="ECO:0000318"/>
    <property type="project" value="GO_Central"/>
</dbReference>
<dbReference type="GO" id="GO:0019674">
    <property type="term" value="P:NAD metabolic process"/>
    <property type="evidence" value="ECO:0007669"/>
    <property type="project" value="InterPro"/>
</dbReference>
<dbReference type="GO" id="GO:0006741">
    <property type="term" value="P:NADP biosynthetic process"/>
    <property type="evidence" value="ECO:0000318"/>
    <property type="project" value="GO_Central"/>
</dbReference>
<dbReference type="FunFam" id="2.60.200.30:FF:000002">
    <property type="entry name" value="NAD kinase"/>
    <property type="match status" value="1"/>
</dbReference>
<dbReference type="Gene3D" id="3.40.50.10330">
    <property type="entry name" value="Probable inorganic polyphosphate/atp-NAD kinase, domain 1"/>
    <property type="match status" value="1"/>
</dbReference>
<dbReference type="Gene3D" id="2.60.200.30">
    <property type="entry name" value="Probable inorganic polyphosphate/atp-NAD kinase, domain 2"/>
    <property type="match status" value="1"/>
</dbReference>
<dbReference type="HAMAP" id="MF_00361">
    <property type="entry name" value="NAD_kinase"/>
    <property type="match status" value="1"/>
</dbReference>
<dbReference type="InterPro" id="IPR017438">
    <property type="entry name" value="ATP-NAD_kinase_N"/>
</dbReference>
<dbReference type="InterPro" id="IPR017437">
    <property type="entry name" value="ATP-NAD_kinase_PpnK-typ_C"/>
</dbReference>
<dbReference type="InterPro" id="IPR016064">
    <property type="entry name" value="NAD/diacylglycerol_kinase_sf"/>
</dbReference>
<dbReference type="InterPro" id="IPR002504">
    <property type="entry name" value="NADK"/>
</dbReference>
<dbReference type="NCBIfam" id="NF002902">
    <property type="entry name" value="PRK03501.1"/>
    <property type="match status" value="1"/>
</dbReference>
<dbReference type="NCBIfam" id="NF003424">
    <property type="entry name" value="PRK04885.1"/>
    <property type="match status" value="1"/>
</dbReference>
<dbReference type="PANTHER" id="PTHR20275">
    <property type="entry name" value="NAD KINASE"/>
    <property type="match status" value="1"/>
</dbReference>
<dbReference type="PANTHER" id="PTHR20275:SF9">
    <property type="entry name" value="NAD KINASE 2"/>
    <property type="match status" value="1"/>
</dbReference>
<dbReference type="Pfam" id="PF20143">
    <property type="entry name" value="NAD_kinase_C"/>
    <property type="match status" value="1"/>
</dbReference>
<dbReference type="SUPFAM" id="SSF111331">
    <property type="entry name" value="NAD kinase/diacylglycerol kinase-like"/>
    <property type="match status" value="1"/>
</dbReference>